<dbReference type="EMBL" id="CP000270">
    <property type="protein sequence ID" value="ABE32141.1"/>
    <property type="molecule type" value="Genomic_DNA"/>
</dbReference>
<dbReference type="RefSeq" id="WP_011489642.1">
    <property type="nucleotide sequence ID" value="NC_007951.1"/>
</dbReference>
<dbReference type="SMR" id="Q13UU8"/>
<dbReference type="STRING" id="266265.Bxe_A0793"/>
<dbReference type="KEGG" id="bxb:DR64_2960"/>
<dbReference type="KEGG" id="bxe:Bxe_A0793"/>
<dbReference type="PATRIC" id="fig|266265.5.peg.3795"/>
<dbReference type="eggNOG" id="COG0480">
    <property type="taxonomic scope" value="Bacteria"/>
</dbReference>
<dbReference type="OrthoDB" id="9804431at2"/>
<dbReference type="Proteomes" id="UP000001817">
    <property type="component" value="Chromosome 1"/>
</dbReference>
<dbReference type="GO" id="GO:0005737">
    <property type="term" value="C:cytoplasm"/>
    <property type="evidence" value="ECO:0007669"/>
    <property type="project" value="UniProtKB-SubCell"/>
</dbReference>
<dbReference type="GO" id="GO:0005525">
    <property type="term" value="F:GTP binding"/>
    <property type="evidence" value="ECO:0007669"/>
    <property type="project" value="UniProtKB-UniRule"/>
</dbReference>
<dbReference type="GO" id="GO:0003924">
    <property type="term" value="F:GTPase activity"/>
    <property type="evidence" value="ECO:0007669"/>
    <property type="project" value="InterPro"/>
</dbReference>
<dbReference type="GO" id="GO:0097216">
    <property type="term" value="F:guanosine tetraphosphate binding"/>
    <property type="evidence" value="ECO:0007669"/>
    <property type="project" value="UniProtKB-ARBA"/>
</dbReference>
<dbReference type="GO" id="GO:0003746">
    <property type="term" value="F:translation elongation factor activity"/>
    <property type="evidence" value="ECO:0007669"/>
    <property type="project" value="UniProtKB-UniRule"/>
</dbReference>
<dbReference type="GO" id="GO:0032790">
    <property type="term" value="P:ribosome disassembly"/>
    <property type="evidence" value="ECO:0007669"/>
    <property type="project" value="TreeGrafter"/>
</dbReference>
<dbReference type="CDD" id="cd01886">
    <property type="entry name" value="EF-G"/>
    <property type="match status" value="1"/>
</dbReference>
<dbReference type="CDD" id="cd16262">
    <property type="entry name" value="EFG_III"/>
    <property type="match status" value="1"/>
</dbReference>
<dbReference type="CDD" id="cd01434">
    <property type="entry name" value="EFG_mtEFG1_IV"/>
    <property type="match status" value="1"/>
</dbReference>
<dbReference type="CDD" id="cd03713">
    <property type="entry name" value="EFG_mtEFG_C"/>
    <property type="match status" value="1"/>
</dbReference>
<dbReference type="CDD" id="cd04088">
    <property type="entry name" value="EFG_mtEFG_II"/>
    <property type="match status" value="1"/>
</dbReference>
<dbReference type="FunFam" id="2.40.30.10:FF:000006">
    <property type="entry name" value="Elongation factor G"/>
    <property type="match status" value="1"/>
</dbReference>
<dbReference type="FunFam" id="3.30.230.10:FF:000003">
    <property type="entry name" value="Elongation factor G"/>
    <property type="match status" value="1"/>
</dbReference>
<dbReference type="FunFam" id="3.30.70.240:FF:000001">
    <property type="entry name" value="Elongation factor G"/>
    <property type="match status" value="1"/>
</dbReference>
<dbReference type="FunFam" id="3.30.70.870:FF:000001">
    <property type="entry name" value="Elongation factor G"/>
    <property type="match status" value="1"/>
</dbReference>
<dbReference type="FunFam" id="3.40.50.300:FF:000029">
    <property type="entry name" value="Elongation factor G"/>
    <property type="match status" value="1"/>
</dbReference>
<dbReference type="Gene3D" id="3.30.230.10">
    <property type="match status" value="1"/>
</dbReference>
<dbReference type="Gene3D" id="3.30.70.240">
    <property type="match status" value="1"/>
</dbReference>
<dbReference type="Gene3D" id="3.30.70.870">
    <property type="entry name" value="Elongation Factor G (Translational Gtpase), domain 3"/>
    <property type="match status" value="1"/>
</dbReference>
<dbReference type="Gene3D" id="3.40.50.300">
    <property type="entry name" value="P-loop containing nucleotide triphosphate hydrolases"/>
    <property type="match status" value="1"/>
</dbReference>
<dbReference type="Gene3D" id="2.40.30.10">
    <property type="entry name" value="Translation factors"/>
    <property type="match status" value="1"/>
</dbReference>
<dbReference type="HAMAP" id="MF_00054_B">
    <property type="entry name" value="EF_G_EF_2_B"/>
    <property type="match status" value="1"/>
</dbReference>
<dbReference type="InterPro" id="IPR041095">
    <property type="entry name" value="EFG_II"/>
</dbReference>
<dbReference type="InterPro" id="IPR009022">
    <property type="entry name" value="EFG_III"/>
</dbReference>
<dbReference type="InterPro" id="IPR035647">
    <property type="entry name" value="EFG_III/V"/>
</dbReference>
<dbReference type="InterPro" id="IPR047872">
    <property type="entry name" value="EFG_IV"/>
</dbReference>
<dbReference type="InterPro" id="IPR035649">
    <property type="entry name" value="EFG_V"/>
</dbReference>
<dbReference type="InterPro" id="IPR000640">
    <property type="entry name" value="EFG_V-like"/>
</dbReference>
<dbReference type="InterPro" id="IPR004161">
    <property type="entry name" value="EFTu-like_2"/>
</dbReference>
<dbReference type="InterPro" id="IPR031157">
    <property type="entry name" value="G_TR_CS"/>
</dbReference>
<dbReference type="InterPro" id="IPR027417">
    <property type="entry name" value="P-loop_NTPase"/>
</dbReference>
<dbReference type="InterPro" id="IPR020568">
    <property type="entry name" value="Ribosomal_Su5_D2-typ_SF"/>
</dbReference>
<dbReference type="InterPro" id="IPR014721">
    <property type="entry name" value="Ribsml_uS5_D2-typ_fold_subgr"/>
</dbReference>
<dbReference type="InterPro" id="IPR005225">
    <property type="entry name" value="Small_GTP-bd"/>
</dbReference>
<dbReference type="InterPro" id="IPR000795">
    <property type="entry name" value="T_Tr_GTP-bd_dom"/>
</dbReference>
<dbReference type="InterPro" id="IPR009000">
    <property type="entry name" value="Transl_B-barrel_sf"/>
</dbReference>
<dbReference type="InterPro" id="IPR004540">
    <property type="entry name" value="Transl_elong_EFG/EF2"/>
</dbReference>
<dbReference type="InterPro" id="IPR005517">
    <property type="entry name" value="Transl_elong_EFG/EF2_IV"/>
</dbReference>
<dbReference type="NCBIfam" id="TIGR00484">
    <property type="entry name" value="EF-G"/>
    <property type="match status" value="1"/>
</dbReference>
<dbReference type="NCBIfam" id="NF009381">
    <property type="entry name" value="PRK12740.1-5"/>
    <property type="match status" value="1"/>
</dbReference>
<dbReference type="NCBIfam" id="TIGR00231">
    <property type="entry name" value="small_GTP"/>
    <property type="match status" value="1"/>
</dbReference>
<dbReference type="PANTHER" id="PTHR43261:SF1">
    <property type="entry name" value="RIBOSOME-RELEASING FACTOR 2, MITOCHONDRIAL"/>
    <property type="match status" value="1"/>
</dbReference>
<dbReference type="PANTHER" id="PTHR43261">
    <property type="entry name" value="TRANSLATION ELONGATION FACTOR G-RELATED"/>
    <property type="match status" value="1"/>
</dbReference>
<dbReference type="Pfam" id="PF00679">
    <property type="entry name" value="EFG_C"/>
    <property type="match status" value="1"/>
</dbReference>
<dbReference type="Pfam" id="PF14492">
    <property type="entry name" value="EFG_III"/>
    <property type="match status" value="1"/>
</dbReference>
<dbReference type="Pfam" id="PF03764">
    <property type="entry name" value="EFG_IV"/>
    <property type="match status" value="1"/>
</dbReference>
<dbReference type="Pfam" id="PF00009">
    <property type="entry name" value="GTP_EFTU"/>
    <property type="match status" value="1"/>
</dbReference>
<dbReference type="Pfam" id="PF03144">
    <property type="entry name" value="GTP_EFTU_D2"/>
    <property type="match status" value="1"/>
</dbReference>
<dbReference type="PRINTS" id="PR00315">
    <property type="entry name" value="ELONGATNFCT"/>
</dbReference>
<dbReference type="SMART" id="SM00838">
    <property type="entry name" value="EFG_C"/>
    <property type="match status" value="1"/>
</dbReference>
<dbReference type="SMART" id="SM00889">
    <property type="entry name" value="EFG_IV"/>
    <property type="match status" value="1"/>
</dbReference>
<dbReference type="SUPFAM" id="SSF54980">
    <property type="entry name" value="EF-G C-terminal domain-like"/>
    <property type="match status" value="2"/>
</dbReference>
<dbReference type="SUPFAM" id="SSF52540">
    <property type="entry name" value="P-loop containing nucleoside triphosphate hydrolases"/>
    <property type="match status" value="1"/>
</dbReference>
<dbReference type="SUPFAM" id="SSF54211">
    <property type="entry name" value="Ribosomal protein S5 domain 2-like"/>
    <property type="match status" value="1"/>
</dbReference>
<dbReference type="SUPFAM" id="SSF50447">
    <property type="entry name" value="Translation proteins"/>
    <property type="match status" value="1"/>
</dbReference>
<dbReference type="PROSITE" id="PS00301">
    <property type="entry name" value="G_TR_1"/>
    <property type="match status" value="1"/>
</dbReference>
<dbReference type="PROSITE" id="PS51722">
    <property type="entry name" value="G_TR_2"/>
    <property type="match status" value="1"/>
</dbReference>
<feature type="chain" id="PRO_0000263437" description="Elongation factor G 1">
    <location>
        <begin position="1"/>
        <end position="701"/>
    </location>
</feature>
<feature type="domain" description="tr-type G">
    <location>
        <begin position="8"/>
        <end position="290"/>
    </location>
</feature>
<feature type="binding site" evidence="1">
    <location>
        <begin position="17"/>
        <end position="24"/>
    </location>
    <ligand>
        <name>GTP</name>
        <dbReference type="ChEBI" id="CHEBI:37565"/>
    </ligand>
</feature>
<feature type="binding site" evidence="1">
    <location>
        <begin position="88"/>
        <end position="92"/>
    </location>
    <ligand>
        <name>GTP</name>
        <dbReference type="ChEBI" id="CHEBI:37565"/>
    </ligand>
</feature>
<feature type="binding site" evidence="1">
    <location>
        <begin position="142"/>
        <end position="145"/>
    </location>
    <ligand>
        <name>GTP</name>
        <dbReference type="ChEBI" id="CHEBI:37565"/>
    </ligand>
</feature>
<proteinExistence type="inferred from homology"/>
<evidence type="ECO:0000255" key="1">
    <source>
        <dbReference type="HAMAP-Rule" id="MF_00054"/>
    </source>
</evidence>
<name>EFG1_PARXL</name>
<accession>Q13UU8</accession>
<protein>
    <recommendedName>
        <fullName evidence="1">Elongation factor G 1</fullName>
        <shortName evidence="1">EF-G 1</shortName>
    </recommendedName>
</protein>
<keyword id="KW-0963">Cytoplasm</keyword>
<keyword id="KW-0251">Elongation factor</keyword>
<keyword id="KW-0342">GTP-binding</keyword>
<keyword id="KW-0547">Nucleotide-binding</keyword>
<keyword id="KW-0648">Protein biosynthesis</keyword>
<keyword id="KW-1185">Reference proteome</keyword>
<comment type="function">
    <text evidence="1">Catalyzes the GTP-dependent ribosomal translocation step during translation elongation. During this step, the ribosome changes from the pre-translocational (PRE) to the post-translocational (POST) state as the newly formed A-site-bound peptidyl-tRNA and P-site-bound deacylated tRNA move to the P and E sites, respectively. Catalyzes the coordinated movement of the two tRNA molecules, the mRNA and conformational changes in the ribosome.</text>
</comment>
<comment type="subcellular location">
    <subcellularLocation>
        <location evidence="1">Cytoplasm</location>
    </subcellularLocation>
</comment>
<comment type="similarity">
    <text evidence="1">Belongs to the TRAFAC class translation factor GTPase superfamily. Classic translation factor GTPase family. EF-G/EF-2 subfamily.</text>
</comment>
<sequence>MPRKTPIERYRNIGISAHIDAGKTTTTERILFYTGVTHKIGEVHDGAATMDWMEQEQERGITITSAATTAFWKGMAGNYPEHRINIIDTPGHVDFTIEVERSMRVLDGACMVYDSVGGVQPQSETVWRQANKYKVPRIAFVNKMDRVGADFFRVQRQIGDRLKGVAVPIQIPVGAEEHFQGVVDLVKMKAIFWDEENQGIKFEYRDIPPELAATAKEWHDKMVEAAAEANEELLDKYLGGETLTEEEIKHGIRVRTIANEIVPMLCGSAFKNKGVQAMLDAVIDYLPSPLDVPAITGHDEHDNEIERHPNDNDPFSALAFKIMTDPFVGQLIFFRVYSGVVNSGDTVYNAIKEKKERLGRILQMHANERKEIKEVYAGDIAAAVGLKEATTGDTLCDPNHVIILEKMIFPEPVISQAVEPKTKVDQEKMGIALNRLAQEDPSFRVQTDEESGQTIISGMGELHLEILVDRMKREFGVEATVGKPQVAYRETVRNKVEDVEGKFVKQSGGRGQYGHAVITLEPAPQGKGYEFVDAIKGGVIPREYIPAVDKGIQETLKAGVLAGYPVVDVKVTLTFGSYHDVDSNENAFRMAGSMAFKEAMRKARPVLLEPMMAVEVETPEDFMGNVMGDLSSRRGLVQGMEDIAGGGGKLVRAEVPLAEMFGYSTSLRSATQGRATYTMEFKHYAETPNNVAEAVINAKHK</sequence>
<gene>
    <name evidence="1" type="primary">fusA1</name>
    <name type="ordered locus">Bxeno_A3603</name>
    <name type="ORF">Bxe_A0793</name>
</gene>
<organism>
    <name type="scientific">Paraburkholderia xenovorans (strain LB400)</name>
    <dbReference type="NCBI Taxonomy" id="266265"/>
    <lineage>
        <taxon>Bacteria</taxon>
        <taxon>Pseudomonadati</taxon>
        <taxon>Pseudomonadota</taxon>
        <taxon>Betaproteobacteria</taxon>
        <taxon>Burkholderiales</taxon>
        <taxon>Burkholderiaceae</taxon>
        <taxon>Paraburkholderia</taxon>
    </lineage>
</organism>
<reference key="1">
    <citation type="journal article" date="2006" name="Proc. Natl. Acad. Sci. U.S.A.">
        <title>Burkholderia xenovorans LB400 harbors a multi-replicon, 9.73-Mbp genome shaped for versatility.</title>
        <authorList>
            <person name="Chain P.S.G."/>
            <person name="Denef V.J."/>
            <person name="Konstantinidis K.T."/>
            <person name="Vergez L.M."/>
            <person name="Agullo L."/>
            <person name="Reyes V.L."/>
            <person name="Hauser L."/>
            <person name="Cordova M."/>
            <person name="Gomez L."/>
            <person name="Gonzalez M."/>
            <person name="Land M."/>
            <person name="Lao V."/>
            <person name="Larimer F."/>
            <person name="LiPuma J.J."/>
            <person name="Mahenthiralingam E."/>
            <person name="Malfatti S.A."/>
            <person name="Marx C.J."/>
            <person name="Parnell J.J."/>
            <person name="Ramette A."/>
            <person name="Richardson P."/>
            <person name="Seeger M."/>
            <person name="Smith D."/>
            <person name="Spilker T."/>
            <person name="Sul W.J."/>
            <person name="Tsoi T.V."/>
            <person name="Ulrich L.E."/>
            <person name="Zhulin I.B."/>
            <person name="Tiedje J.M."/>
        </authorList>
    </citation>
    <scope>NUCLEOTIDE SEQUENCE [LARGE SCALE GENOMIC DNA]</scope>
    <source>
        <strain>LB400</strain>
    </source>
</reference>